<dbReference type="EMBL" id="X16663">
    <property type="protein sequence ID" value="CAA34651.1"/>
    <property type="molecule type" value="mRNA"/>
</dbReference>
<dbReference type="EMBL" id="BT006824">
    <property type="protein sequence ID" value="AAP35470.1"/>
    <property type="molecule type" value="mRNA"/>
</dbReference>
<dbReference type="EMBL" id="AK298663">
    <property type="protein sequence ID" value="BAG60831.1"/>
    <property type="molecule type" value="mRNA"/>
</dbReference>
<dbReference type="EMBL" id="AK312750">
    <property type="protein sequence ID" value="BAG35617.1"/>
    <property type="molecule type" value="mRNA"/>
</dbReference>
<dbReference type="EMBL" id="CR456794">
    <property type="protein sequence ID" value="CAG33075.1"/>
    <property type="molecule type" value="mRNA"/>
</dbReference>
<dbReference type="EMBL" id="AC133750">
    <property type="status" value="NOT_ANNOTATED_CDS"/>
    <property type="molecule type" value="Genomic_DNA"/>
</dbReference>
<dbReference type="EMBL" id="BC016758">
    <property type="protein sequence ID" value="AAH16758.1"/>
    <property type="molecule type" value="mRNA"/>
</dbReference>
<dbReference type="CCDS" id="CCDS3003.1">
    <molecule id="P14317-1"/>
</dbReference>
<dbReference type="PIR" id="S07633">
    <property type="entry name" value="S07633"/>
</dbReference>
<dbReference type="RefSeq" id="NP_001278970.1">
    <property type="nucleotide sequence ID" value="NM_001292041.1"/>
</dbReference>
<dbReference type="RefSeq" id="NP_005326.3">
    <molecule id="P14317-1"/>
    <property type="nucleotide sequence ID" value="NM_005335.6"/>
</dbReference>
<dbReference type="SMR" id="P14317"/>
<dbReference type="BioGRID" id="109309">
    <property type="interactions" value="63"/>
</dbReference>
<dbReference type="FunCoup" id="P14317">
    <property type="interactions" value="721"/>
</dbReference>
<dbReference type="IntAct" id="P14317">
    <property type="interactions" value="34"/>
</dbReference>
<dbReference type="MINT" id="P14317"/>
<dbReference type="STRING" id="9606.ENSP00000320176"/>
<dbReference type="GlyCosmos" id="P14317">
    <property type="glycosylation" value="3 sites, 2 glycans"/>
</dbReference>
<dbReference type="GlyGen" id="P14317">
    <property type="glycosylation" value="3 sites, 2 O-linked glycans (3 sites)"/>
</dbReference>
<dbReference type="iPTMnet" id="P14317"/>
<dbReference type="MetOSite" id="P14317"/>
<dbReference type="PhosphoSitePlus" id="P14317"/>
<dbReference type="BioMuta" id="HCLS1"/>
<dbReference type="DMDM" id="317373440"/>
<dbReference type="jPOST" id="P14317"/>
<dbReference type="MassIVE" id="P14317"/>
<dbReference type="PaxDb" id="9606-ENSP00000320176"/>
<dbReference type="PeptideAtlas" id="P14317"/>
<dbReference type="ProteomicsDB" id="4850"/>
<dbReference type="ProteomicsDB" id="53045">
    <molecule id="P14317-1"/>
</dbReference>
<dbReference type="Pumba" id="P14317"/>
<dbReference type="Antibodypedia" id="16699">
    <property type="antibodies" value="492 antibodies from 40 providers"/>
</dbReference>
<dbReference type="DNASU" id="3059"/>
<dbReference type="Ensembl" id="ENST00000314583.8">
    <molecule id="P14317-1"/>
    <property type="protein sequence ID" value="ENSP00000320176.3"/>
    <property type="gene ID" value="ENSG00000180353.11"/>
</dbReference>
<dbReference type="Ensembl" id="ENST00000495491.5">
    <molecule id="P14317-2"/>
    <property type="protein sequence ID" value="ENSP00000418299.1"/>
    <property type="gene ID" value="ENSG00000180353.11"/>
</dbReference>
<dbReference type="GeneID" id="3059"/>
<dbReference type="KEGG" id="hsa:3059"/>
<dbReference type="MANE-Select" id="ENST00000314583.8">
    <property type="protein sequence ID" value="ENSP00000320176.3"/>
    <property type="RefSeq nucleotide sequence ID" value="NM_005335.6"/>
    <property type="RefSeq protein sequence ID" value="NP_005326.3"/>
</dbReference>
<dbReference type="UCSC" id="uc003eeh.5">
    <molecule id="P14317-1"/>
    <property type="organism name" value="human"/>
</dbReference>
<dbReference type="AGR" id="HGNC:4844"/>
<dbReference type="CTD" id="3059"/>
<dbReference type="DisGeNET" id="3059"/>
<dbReference type="GeneCards" id="HCLS1"/>
<dbReference type="HGNC" id="HGNC:4844">
    <property type="gene designation" value="HCLS1"/>
</dbReference>
<dbReference type="HPA" id="ENSG00000180353">
    <property type="expression patterns" value="Tissue enhanced (bone marrow, lymphoid tissue)"/>
</dbReference>
<dbReference type="MIM" id="601306">
    <property type="type" value="gene"/>
</dbReference>
<dbReference type="neXtProt" id="NX_P14317"/>
<dbReference type="OpenTargets" id="ENSG00000180353"/>
<dbReference type="PharmGKB" id="PA29220"/>
<dbReference type="VEuPathDB" id="HostDB:ENSG00000180353"/>
<dbReference type="eggNOG" id="ENOG502QS6C">
    <property type="taxonomic scope" value="Eukaryota"/>
</dbReference>
<dbReference type="GeneTree" id="ENSGT00940000158997"/>
<dbReference type="HOGENOM" id="CLU_019379_2_0_1"/>
<dbReference type="InParanoid" id="P14317"/>
<dbReference type="OMA" id="KFDESWW"/>
<dbReference type="OrthoDB" id="5971719at2759"/>
<dbReference type="PAN-GO" id="P14317">
    <property type="GO annotations" value="6 GO annotations based on evolutionary models"/>
</dbReference>
<dbReference type="PhylomeDB" id="P14317"/>
<dbReference type="TreeFam" id="TF318935"/>
<dbReference type="PathwayCommons" id="P14317"/>
<dbReference type="SignaLink" id="P14317"/>
<dbReference type="SIGNOR" id="P14317"/>
<dbReference type="BioGRID-ORCS" id="3059">
    <property type="hits" value="16 hits in 1165 CRISPR screens"/>
</dbReference>
<dbReference type="ChiTaRS" id="HCLS1">
    <property type="organism name" value="human"/>
</dbReference>
<dbReference type="GenomeRNAi" id="3059"/>
<dbReference type="Pharos" id="P14317">
    <property type="development level" value="Tbio"/>
</dbReference>
<dbReference type="PRO" id="PR:P14317"/>
<dbReference type="Proteomes" id="UP000005640">
    <property type="component" value="Chromosome 3"/>
</dbReference>
<dbReference type="RNAct" id="P14317">
    <property type="molecule type" value="protein"/>
</dbReference>
<dbReference type="Bgee" id="ENSG00000180353">
    <property type="expression patterns" value="Expressed in monocyte and 170 other cell types or tissues"/>
</dbReference>
<dbReference type="ExpressionAtlas" id="P14317">
    <property type="expression patterns" value="baseline and differential"/>
</dbReference>
<dbReference type="GO" id="GO:0005737">
    <property type="term" value="C:cytoplasm"/>
    <property type="evidence" value="ECO:0000314"/>
    <property type="project" value="BHF-UCL"/>
</dbReference>
<dbReference type="GO" id="GO:0005829">
    <property type="term" value="C:cytosol"/>
    <property type="evidence" value="ECO:0000314"/>
    <property type="project" value="HPA"/>
</dbReference>
<dbReference type="GO" id="GO:0030139">
    <property type="term" value="C:endocytic vesicle"/>
    <property type="evidence" value="ECO:0000318"/>
    <property type="project" value="GO_Central"/>
</dbReference>
<dbReference type="GO" id="GO:0005739">
    <property type="term" value="C:mitochondrion"/>
    <property type="evidence" value="ECO:0007669"/>
    <property type="project" value="UniProtKB-SubCell"/>
</dbReference>
<dbReference type="GO" id="GO:0005634">
    <property type="term" value="C:nucleus"/>
    <property type="evidence" value="ECO:0000314"/>
    <property type="project" value="BHF-UCL"/>
</dbReference>
<dbReference type="GO" id="GO:0005886">
    <property type="term" value="C:plasma membrane"/>
    <property type="evidence" value="ECO:0000314"/>
    <property type="project" value="HPA"/>
</dbReference>
<dbReference type="GO" id="GO:0005667">
    <property type="term" value="C:transcription regulator complex"/>
    <property type="evidence" value="ECO:0000314"/>
    <property type="project" value="BHF-UCL"/>
</dbReference>
<dbReference type="GO" id="GO:0051015">
    <property type="term" value="F:actin filament binding"/>
    <property type="evidence" value="ECO:0000304"/>
    <property type="project" value="BHF-UCL"/>
</dbReference>
<dbReference type="GO" id="GO:0019901">
    <property type="term" value="F:protein kinase binding"/>
    <property type="evidence" value="ECO:0000353"/>
    <property type="project" value="BHF-UCL"/>
</dbReference>
<dbReference type="GO" id="GO:0061629">
    <property type="term" value="F:RNA polymerase II-specific DNA-binding transcription factor binding"/>
    <property type="evidence" value="ECO:0000353"/>
    <property type="project" value="BHF-UCL"/>
</dbReference>
<dbReference type="GO" id="GO:0017124">
    <property type="term" value="F:SH3 domain binding"/>
    <property type="evidence" value="ECO:0007669"/>
    <property type="project" value="Ensembl"/>
</dbReference>
<dbReference type="GO" id="GO:0035591">
    <property type="term" value="F:signaling adaptor activity"/>
    <property type="evidence" value="ECO:0000315"/>
    <property type="project" value="BHF-UCL"/>
</dbReference>
<dbReference type="GO" id="GO:0007015">
    <property type="term" value="P:actin filament organization"/>
    <property type="evidence" value="ECO:0000314"/>
    <property type="project" value="BHF-UCL"/>
</dbReference>
<dbReference type="GO" id="GO:0071345">
    <property type="term" value="P:cellular response to cytokine stimulus"/>
    <property type="evidence" value="ECO:0000315"/>
    <property type="project" value="BHF-UCL"/>
</dbReference>
<dbReference type="GO" id="GO:0030218">
    <property type="term" value="P:erythrocyte differentiation"/>
    <property type="evidence" value="ECO:0000250"/>
    <property type="project" value="UniProtKB"/>
</dbReference>
<dbReference type="GO" id="GO:0038158">
    <property type="term" value="P:granulocyte colony-stimulating factor signaling pathway"/>
    <property type="evidence" value="ECO:0000315"/>
    <property type="project" value="BHF-UCL"/>
</dbReference>
<dbReference type="GO" id="GO:0035556">
    <property type="term" value="P:intracellular signal transduction"/>
    <property type="evidence" value="ECO:0000304"/>
    <property type="project" value="ProtInc"/>
</dbReference>
<dbReference type="GO" id="GO:2000107">
    <property type="term" value="P:negative regulation of leukocyte apoptotic process"/>
    <property type="evidence" value="ECO:0000315"/>
    <property type="project" value="BHF-UCL"/>
</dbReference>
<dbReference type="GO" id="GO:0000122">
    <property type="term" value="P:negative regulation of transcription by RNA polymerase II"/>
    <property type="evidence" value="ECO:0007669"/>
    <property type="project" value="Ensembl"/>
</dbReference>
<dbReference type="GO" id="GO:0051169">
    <property type="term" value="P:nuclear transport"/>
    <property type="evidence" value="ECO:0000315"/>
    <property type="project" value="BHF-UCL"/>
</dbReference>
<dbReference type="GO" id="GO:0008284">
    <property type="term" value="P:positive regulation of cell population proliferation"/>
    <property type="evidence" value="ECO:0000250"/>
    <property type="project" value="UniProtKB"/>
</dbReference>
<dbReference type="GO" id="GO:0030854">
    <property type="term" value="P:positive regulation of granulocyte differentiation"/>
    <property type="evidence" value="ECO:0000315"/>
    <property type="project" value="BHF-UCL"/>
</dbReference>
<dbReference type="GO" id="GO:0045651">
    <property type="term" value="P:positive regulation of macrophage differentiation"/>
    <property type="evidence" value="ECO:0007669"/>
    <property type="project" value="Ensembl"/>
</dbReference>
<dbReference type="GO" id="GO:0051897">
    <property type="term" value="P:positive regulation of phosphatidylinositol 3-kinase/protein kinase B signal transduction"/>
    <property type="evidence" value="ECO:0000315"/>
    <property type="project" value="BHF-UCL"/>
</dbReference>
<dbReference type="GO" id="GO:0042307">
    <property type="term" value="P:positive regulation of protein import into nucleus"/>
    <property type="evidence" value="ECO:0000315"/>
    <property type="project" value="BHF-UCL"/>
</dbReference>
<dbReference type="GO" id="GO:0045944">
    <property type="term" value="P:positive regulation of transcription by RNA polymerase II"/>
    <property type="evidence" value="ECO:0000315"/>
    <property type="project" value="BHF-UCL"/>
</dbReference>
<dbReference type="GO" id="GO:0030833">
    <property type="term" value="P:regulation of actin filament polymerization"/>
    <property type="evidence" value="ECO:0000315"/>
    <property type="project" value="BHF-UCL"/>
</dbReference>
<dbReference type="GO" id="GO:0006355">
    <property type="term" value="P:regulation of DNA-templated transcription"/>
    <property type="evidence" value="ECO:0000304"/>
    <property type="project" value="ProtInc"/>
</dbReference>
<dbReference type="GO" id="GO:0009725">
    <property type="term" value="P:response to hormone"/>
    <property type="evidence" value="ECO:0000250"/>
    <property type="project" value="UniProtKB"/>
</dbReference>
<dbReference type="GO" id="GO:0007165">
    <property type="term" value="P:signal transduction"/>
    <property type="evidence" value="ECO:0000318"/>
    <property type="project" value="GO_Central"/>
</dbReference>
<dbReference type="CDD" id="cd12073">
    <property type="entry name" value="SH3_HS1"/>
    <property type="match status" value="1"/>
</dbReference>
<dbReference type="FunFam" id="2.30.30.40:FF:000139">
    <property type="entry name" value="Hematopoietic cell-specific Lyn substrate 1"/>
    <property type="match status" value="1"/>
</dbReference>
<dbReference type="Gene3D" id="2.30.30.40">
    <property type="entry name" value="SH3 Domains"/>
    <property type="match status" value="1"/>
</dbReference>
<dbReference type="InterPro" id="IPR003134">
    <property type="entry name" value="Hs1_Cortactin"/>
</dbReference>
<dbReference type="InterPro" id="IPR036028">
    <property type="entry name" value="SH3-like_dom_sf"/>
</dbReference>
<dbReference type="InterPro" id="IPR001452">
    <property type="entry name" value="SH3_domain"/>
</dbReference>
<dbReference type="PANTHER" id="PTHR10829">
    <property type="entry name" value="CORTACTIN AND DREBRIN"/>
    <property type="match status" value="1"/>
</dbReference>
<dbReference type="PANTHER" id="PTHR10829:SF5">
    <property type="entry name" value="HEMATOPOIETIC LINEAGE CELL-SPECIFIC PROTEIN"/>
    <property type="match status" value="1"/>
</dbReference>
<dbReference type="Pfam" id="PF02218">
    <property type="entry name" value="HS1_rep"/>
    <property type="match status" value="4"/>
</dbReference>
<dbReference type="Pfam" id="PF00018">
    <property type="entry name" value="SH3_1"/>
    <property type="match status" value="1"/>
</dbReference>
<dbReference type="PRINTS" id="PR00499">
    <property type="entry name" value="P67PHOX"/>
</dbReference>
<dbReference type="PRINTS" id="PR00452">
    <property type="entry name" value="SH3DOMAIN"/>
</dbReference>
<dbReference type="SMART" id="SM00326">
    <property type="entry name" value="SH3"/>
    <property type="match status" value="1"/>
</dbReference>
<dbReference type="SUPFAM" id="SSF50044">
    <property type="entry name" value="SH3-domain"/>
    <property type="match status" value="1"/>
</dbReference>
<dbReference type="PROSITE" id="PS51090">
    <property type="entry name" value="CORTACTIN"/>
    <property type="match status" value="4"/>
</dbReference>
<dbReference type="PROSITE" id="PS50002">
    <property type="entry name" value="SH3"/>
    <property type="match status" value="1"/>
</dbReference>
<reference key="1">
    <citation type="journal article" date="1989" name="Nucleic Acids Res.">
        <title>Isolation and characterization of a novel human gene expressed specifically in the cells of hematopoietic lineage.</title>
        <authorList>
            <person name="Kitamura D."/>
            <person name="Kaneko H."/>
            <person name="Miyagoe Y."/>
            <person name="Ariyasu T."/>
            <person name="Watanabe T."/>
        </authorList>
    </citation>
    <scope>NUCLEOTIDE SEQUENCE [MRNA] (ISOFORM 1)</scope>
    <scope>VARIANTS ALA-235 AND LEU-436</scope>
</reference>
<reference key="2">
    <citation type="submission" date="2003-05" db="EMBL/GenBank/DDBJ databases">
        <title>Cloning of human full-length CDSs in BD Creator(TM) system donor vector.</title>
        <authorList>
            <person name="Kalnine N."/>
            <person name="Chen X."/>
            <person name="Rolfs A."/>
            <person name="Halleck A."/>
            <person name="Hines L."/>
            <person name="Eisenstein S."/>
            <person name="Koundinya M."/>
            <person name="Raphael J."/>
            <person name="Moreira D."/>
            <person name="Kelley T."/>
            <person name="LaBaer J."/>
            <person name="Lin Y."/>
            <person name="Phelan M."/>
            <person name="Farmer A."/>
        </authorList>
    </citation>
    <scope>NUCLEOTIDE SEQUENCE [LARGE SCALE MRNA] (ISOFORM 1)</scope>
    <scope>VARIANTS ALA-235 AND LEU-436</scope>
</reference>
<reference key="3">
    <citation type="journal article" date="2004" name="Nat. Genet.">
        <title>Complete sequencing and characterization of 21,243 full-length human cDNAs.</title>
        <authorList>
            <person name="Ota T."/>
            <person name="Suzuki Y."/>
            <person name="Nishikawa T."/>
            <person name="Otsuki T."/>
            <person name="Sugiyama T."/>
            <person name="Irie R."/>
            <person name="Wakamatsu A."/>
            <person name="Hayashi K."/>
            <person name="Sato H."/>
            <person name="Nagai K."/>
            <person name="Kimura K."/>
            <person name="Makita H."/>
            <person name="Sekine M."/>
            <person name="Obayashi M."/>
            <person name="Nishi T."/>
            <person name="Shibahara T."/>
            <person name="Tanaka T."/>
            <person name="Ishii S."/>
            <person name="Yamamoto J."/>
            <person name="Saito K."/>
            <person name="Kawai Y."/>
            <person name="Isono Y."/>
            <person name="Nakamura Y."/>
            <person name="Nagahari K."/>
            <person name="Murakami K."/>
            <person name="Yasuda T."/>
            <person name="Iwayanagi T."/>
            <person name="Wagatsuma M."/>
            <person name="Shiratori A."/>
            <person name="Sudo H."/>
            <person name="Hosoiri T."/>
            <person name="Kaku Y."/>
            <person name="Kodaira H."/>
            <person name="Kondo H."/>
            <person name="Sugawara M."/>
            <person name="Takahashi M."/>
            <person name="Kanda K."/>
            <person name="Yokoi T."/>
            <person name="Furuya T."/>
            <person name="Kikkawa E."/>
            <person name="Omura Y."/>
            <person name="Abe K."/>
            <person name="Kamihara K."/>
            <person name="Katsuta N."/>
            <person name="Sato K."/>
            <person name="Tanikawa M."/>
            <person name="Yamazaki M."/>
            <person name="Ninomiya K."/>
            <person name="Ishibashi T."/>
            <person name="Yamashita H."/>
            <person name="Murakawa K."/>
            <person name="Fujimori K."/>
            <person name="Tanai H."/>
            <person name="Kimata M."/>
            <person name="Watanabe M."/>
            <person name="Hiraoka S."/>
            <person name="Chiba Y."/>
            <person name="Ishida S."/>
            <person name="Ono Y."/>
            <person name="Takiguchi S."/>
            <person name="Watanabe S."/>
            <person name="Yosida M."/>
            <person name="Hotuta T."/>
            <person name="Kusano J."/>
            <person name="Kanehori K."/>
            <person name="Takahashi-Fujii A."/>
            <person name="Hara H."/>
            <person name="Tanase T.-O."/>
            <person name="Nomura Y."/>
            <person name="Togiya S."/>
            <person name="Komai F."/>
            <person name="Hara R."/>
            <person name="Takeuchi K."/>
            <person name="Arita M."/>
            <person name="Imose N."/>
            <person name="Musashino K."/>
            <person name="Yuuki H."/>
            <person name="Oshima A."/>
            <person name="Sasaki N."/>
            <person name="Aotsuka S."/>
            <person name="Yoshikawa Y."/>
            <person name="Matsunawa H."/>
            <person name="Ichihara T."/>
            <person name="Shiohata N."/>
            <person name="Sano S."/>
            <person name="Moriya S."/>
            <person name="Momiyama H."/>
            <person name="Satoh N."/>
            <person name="Takami S."/>
            <person name="Terashima Y."/>
            <person name="Suzuki O."/>
            <person name="Nakagawa S."/>
            <person name="Senoh A."/>
            <person name="Mizoguchi H."/>
            <person name="Goto Y."/>
            <person name="Shimizu F."/>
            <person name="Wakebe H."/>
            <person name="Hishigaki H."/>
            <person name="Watanabe T."/>
            <person name="Sugiyama A."/>
            <person name="Takemoto M."/>
            <person name="Kawakami B."/>
            <person name="Yamazaki M."/>
            <person name="Watanabe K."/>
            <person name="Kumagai A."/>
            <person name="Itakura S."/>
            <person name="Fukuzumi Y."/>
            <person name="Fujimori Y."/>
            <person name="Komiyama M."/>
            <person name="Tashiro H."/>
            <person name="Tanigami A."/>
            <person name="Fujiwara T."/>
            <person name="Ono T."/>
            <person name="Yamada K."/>
            <person name="Fujii Y."/>
            <person name="Ozaki K."/>
            <person name="Hirao M."/>
            <person name="Ohmori Y."/>
            <person name="Kawabata A."/>
            <person name="Hikiji T."/>
            <person name="Kobatake N."/>
            <person name="Inagaki H."/>
            <person name="Ikema Y."/>
            <person name="Okamoto S."/>
            <person name="Okitani R."/>
            <person name="Kawakami T."/>
            <person name="Noguchi S."/>
            <person name="Itoh T."/>
            <person name="Shigeta K."/>
            <person name="Senba T."/>
            <person name="Matsumura K."/>
            <person name="Nakajima Y."/>
            <person name="Mizuno T."/>
            <person name="Morinaga M."/>
            <person name="Sasaki M."/>
            <person name="Togashi T."/>
            <person name="Oyama M."/>
            <person name="Hata H."/>
            <person name="Watanabe M."/>
            <person name="Komatsu T."/>
            <person name="Mizushima-Sugano J."/>
            <person name="Satoh T."/>
            <person name="Shirai Y."/>
            <person name="Takahashi Y."/>
            <person name="Nakagawa K."/>
            <person name="Okumura K."/>
            <person name="Nagase T."/>
            <person name="Nomura N."/>
            <person name="Kikuchi H."/>
            <person name="Masuho Y."/>
            <person name="Yamashita R."/>
            <person name="Nakai K."/>
            <person name="Yada T."/>
            <person name="Nakamura Y."/>
            <person name="Ohara O."/>
            <person name="Isogai T."/>
            <person name="Sugano S."/>
        </authorList>
    </citation>
    <scope>NUCLEOTIDE SEQUENCE [LARGE SCALE MRNA] (ISOFORMS 1 AND 2)</scope>
    <scope>VARIANTS ALA-235 AND LEU-436</scope>
    <source>
        <tissue>Spleen</tissue>
    </source>
</reference>
<reference key="4">
    <citation type="submission" date="2004-06" db="EMBL/GenBank/DDBJ databases">
        <title>Cloning of human full open reading frames in Gateway(TM) system entry vector (pDONR201).</title>
        <authorList>
            <person name="Ebert L."/>
            <person name="Schick M."/>
            <person name="Neubert P."/>
            <person name="Schatten R."/>
            <person name="Henze S."/>
            <person name="Korn B."/>
        </authorList>
    </citation>
    <scope>NUCLEOTIDE SEQUENCE [LARGE SCALE MRNA] (ISOFORM 1)</scope>
    <scope>VARIANTS ALA-235 AND LEU-436</scope>
</reference>
<reference key="5">
    <citation type="journal article" date="2006" name="Nature">
        <title>The DNA sequence, annotation and analysis of human chromosome 3.</title>
        <authorList>
            <person name="Muzny D.M."/>
            <person name="Scherer S.E."/>
            <person name="Kaul R."/>
            <person name="Wang J."/>
            <person name="Yu J."/>
            <person name="Sudbrak R."/>
            <person name="Buhay C.J."/>
            <person name="Chen R."/>
            <person name="Cree A."/>
            <person name="Ding Y."/>
            <person name="Dugan-Rocha S."/>
            <person name="Gill R."/>
            <person name="Gunaratne P."/>
            <person name="Harris R.A."/>
            <person name="Hawes A.C."/>
            <person name="Hernandez J."/>
            <person name="Hodgson A.V."/>
            <person name="Hume J."/>
            <person name="Jackson A."/>
            <person name="Khan Z.M."/>
            <person name="Kovar-Smith C."/>
            <person name="Lewis L.R."/>
            <person name="Lozado R.J."/>
            <person name="Metzker M.L."/>
            <person name="Milosavljevic A."/>
            <person name="Miner G.R."/>
            <person name="Morgan M.B."/>
            <person name="Nazareth L.V."/>
            <person name="Scott G."/>
            <person name="Sodergren E."/>
            <person name="Song X.-Z."/>
            <person name="Steffen D."/>
            <person name="Wei S."/>
            <person name="Wheeler D.A."/>
            <person name="Wright M.W."/>
            <person name="Worley K.C."/>
            <person name="Yuan Y."/>
            <person name="Zhang Z."/>
            <person name="Adams C.Q."/>
            <person name="Ansari-Lari M.A."/>
            <person name="Ayele M."/>
            <person name="Brown M.J."/>
            <person name="Chen G."/>
            <person name="Chen Z."/>
            <person name="Clendenning J."/>
            <person name="Clerc-Blankenburg K.P."/>
            <person name="Chen R."/>
            <person name="Chen Z."/>
            <person name="Davis C."/>
            <person name="Delgado O."/>
            <person name="Dinh H.H."/>
            <person name="Dong W."/>
            <person name="Draper H."/>
            <person name="Ernst S."/>
            <person name="Fu G."/>
            <person name="Gonzalez-Garay M.L."/>
            <person name="Garcia D.K."/>
            <person name="Gillett W."/>
            <person name="Gu J."/>
            <person name="Hao B."/>
            <person name="Haugen E."/>
            <person name="Havlak P."/>
            <person name="He X."/>
            <person name="Hennig S."/>
            <person name="Hu S."/>
            <person name="Huang W."/>
            <person name="Jackson L.R."/>
            <person name="Jacob L.S."/>
            <person name="Kelly S.H."/>
            <person name="Kube M."/>
            <person name="Levy R."/>
            <person name="Li Z."/>
            <person name="Liu B."/>
            <person name="Liu J."/>
            <person name="Liu W."/>
            <person name="Lu J."/>
            <person name="Maheshwari M."/>
            <person name="Nguyen B.-V."/>
            <person name="Okwuonu G.O."/>
            <person name="Palmeiri A."/>
            <person name="Pasternak S."/>
            <person name="Perez L.M."/>
            <person name="Phelps K.A."/>
            <person name="Plopper F.J."/>
            <person name="Qiang B."/>
            <person name="Raymond C."/>
            <person name="Rodriguez R."/>
            <person name="Saenphimmachak C."/>
            <person name="Santibanez J."/>
            <person name="Shen H."/>
            <person name="Shen Y."/>
            <person name="Subramanian S."/>
            <person name="Tabor P.E."/>
            <person name="Verduzco D."/>
            <person name="Waldron L."/>
            <person name="Wang J."/>
            <person name="Wang J."/>
            <person name="Wang Q."/>
            <person name="Williams G.A."/>
            <person name="Wong G.K.-S."/>
            <person name="Yao Z."/>
            <person name="Zhang J."/>
            <person name="Zhang X."/>
            <person name="Zhao G."/>
            <person name="Zhou J."/>
            <person name="Zhou Y."/>
            <person name="Nelson D."/>
            <person name="Lehrach H."/>
            <person name="Reinhardt R."/>
            <person name="Naylor S.L."/>
            <person name="Yang H."/>
            <person name="Olson M."/>
            <person name="Weinstock G."/>
            <person name="Gibbs R.A."/>
        </authorList>
    </citation>
    <scope>NUCLEOTIDE SEQUENCE [LARGE SCALE GENOMIC DNA]</scope>
</reference>
<reference key="6">
    <citation type="journal article" date="2004" name="Genome Res.">
        <title>The status, quality, and expansion of the NIH full-length cDNA project: the Mammalian Gene Collection (MGC).</title>
        <authorList>
            <consortium name="The MGC Project Team"/>
        </authorList>
    </citation>
    <scope>NUCLEOTIDE SEQUENCE [LARGE SCALE MRNA] (ISOFORM 1)</scope>
    <scope>VARIANTS ALA-235 AND LEU-436</scope>
    <source>
        <tissue>Lymph</tissue>
    </source>
</reference>
<reference key="7">
    <citation type="journal article" date="1993" name="Proc. Natl. Acad. Sci. U.S.A.">
        <title>Identification of HS1 protein as a major substrate of protein-tyrosine kinase(s) upon B-cell antigen receptor-mediated signaling.</title>
        <authorList>
            <person name="Yamanashi Y."/>
            <person name="Okada M."/>
            <person name="Semba T."/>
            <person name="Yamori T."/>
            <person name="Umemori H."/>
            <person name="Tsunasawa S."/>
            <person name="Toyoshima K."/>
            <person name="Kitamura D."/>
            <person name="Watanabe T."/>
            <person name="Yamamoto T."/>
        </authorList>
    </citation>
    <scope>PROTEIN SEQUENCE OF 4-26; 79-95; 134-146; 208-223 AND 274-289</scope>
    <scope>INTERACTION WITH LYN</scope>
    <scope>SUBCELLULAR LOCATION</scope>
    <scope>PHOSPHORYLATION</scope>
    <source>
        <tissue>B-cell lymphoma</tissue>
    </source>
</reference>
<reference key="8">
    <citation type="journal article" date="1996" name="Biochem. Biophys. Res. Commun.">
        <title>Identification of the 70kD heat shock cognate protein (Hsc70) and alpha-actinin-1 as novel phosphotyrosine-containing proteins in T lymphocytes.</title>
        <authorList>
            <person name="Egerton M."/>
            <person name="Moritz R.L."/>
            <person name="Druker B."/>
            <person name="Kelso A."/>
            <person name="Simpson R.J."/>
        </authorList>
    </citation>
    <scope>PROTEIN SEQUENCE OF 97-108; 193-201 AND 240-248</scope>
</reference>
<reference key="9">
    <citation type="journal article" date="1996" name="Biochemistry">
        <title>SH2 domains mediate the sequential phosphorylation of HS1 protein by p72syk and Src-related protein tyrosine kinases.</title>
        <authorList>
            <person name="Ruzzene M."/>
            <person name="Brunati A.M."/>
            <person name="Marin O."/>
            <person name="Donella-Deana A."/>
            <person name="Pinna L.A."/>
        </authorList>
    </citation>
    <scope>PHOSPHORYLATION AT TYR-222 AND TYR-397</scope>
    <scope>PHOSPHORYLATION BY SYK; LYN; FYN AND FGR</scope>
</reference>
<reference key="10">
    <citation type="journal article" date="1997" name="J. Immunol.">
        <title>HAX-1, a novel intracellular protein, localized on mitochondria, directly associates with HS1, a substrate of Src family tyrosine kinases.</title>
        <authorList>
            <person name="Suzuki Y."/>
            <person name="Demoliere C."/>
            <person name="Kitamura D."/>
            <person name="Takeshita H."/>
            <person name="Deuschle U."/>
            <person name="Watanabe T."/>
        </authorList>
    </citation>
    <scope>INTERACTION WITH HAX1</scope>
</reference>
<reference key="11">
    <citation type="journal article" date="1999" name="J. Biol. Chem.">
        <title>Molecular features underlying the sequential phosphorylation of HS1 protein and its association with c-Fgr protein-tyrosine kinase.</title>
        <authorList>
            <person name="Brunati A.M."/>
            <person name="Donella-Deana A."/>
            <person name="James P."/>
            <person name="Quadroni M."/>
            <person name="Contri A."/>
            <person name="Marin O."/>
            <person name="Pinna L.A."/>
        </authorList>
    </citation>
    <scope>PHOSPHORYLATION AT TYR-222 AND TYR-397</scope>
    <scope>IDENTIFICATION BY MASS SPECTROMETRY</scope>
    <scope>INTERACTION WITH FGR</scope>
</reference>
<reference key="12">
    <citation type="journal article" date="2003" name="Proc. Natl. Acad. Sci. U.S.A.">
        <title>Profiling of tyrosine phosphorylation pathways in human cells using mass spectrometry.</title>
        <authorList>
            <person name="Salomon A.R."/>
            <person name="Ficarro S.B."/>
            <person name="Brill L.M."/>
            <person name="Brinker A."/>
            <person name="Phung Q.T."/>
            <person name="Ericson C."/>
            <person name="Sauer K."/>
            <person name="Brock A."/>
            <person name="Horn D.M."/>
            <person name="Schultz P.G."/>
            <person name="Peters E.C."/>
        </authorList>
    </citation>
    <scope>PHOSPHORYLATION [LARGE SCALE ANALYSIS] AT TYR-198</scope>
    <scope>IDENTIFICATION BY MASS SPECTROMETRY [LARGE SCALE ANALYSIS]</scope>
</reference>
<reference key="13">
    <citation type="journal article" date="2004" name="Anal. Chem.">
        <title>Robust phosphoproteomic profiling of tyrosine phosphorylation sites from human T cells using immobilized metal affinity chromatography and tandem mass spectrometry.</title>
        <authorList>
            <person name="Brill L.M."/>
            <person name="Salomon A.R."/>
            <person name="Ficarro S.B."/>
            <person name="Mukherji M."/>
            <person name="Stettler-Gill M."/>
            <person name="Peters E.C."/>
        </authorList>
    </citation>
    <scope>PHOSPHORYLATION [LARGE SCALE ANALYSIS] AT TYR-198</scope>
    <scope>IDENTIFICATION BY MASS SPECTROMETRY [LARGE SCALE ANALYSIS]</scope>
    <source>
        <tissue>Leukemic T-cell</tissue>
    </source>
</reference>
<reference key="14">
    <citation type="journal article" date="2009" name="Sci. Signal.">
        <title>Quantitative phosphoproteomic analysis of T cell receptor signaling reveals system-wide modulation of protein-protein interactions.</title>
        <authorList>
            <person name="Mayya V."/>
            <person name="Lundgren D.H."/>
            <person name="Hwang S.-I."/>
            <person name="Rezaul K."/>
            <person name="Wu L."/>
            <person name="Eng J.K."/>
            <person name="Rodionov V."/>
            <person name="Han D.K."/>
        </authorList>
    </citation>
    <scope>PHOSPHORYLATION [LARGE SCALE ANALYSIS] AT SER-275 AND THR-308</scope>
    <scope>IDENTIFICATION BY MASS SPECTROMETRY [LARGE SCALE ANALYSIS]</scope>
    <source>
        <tissue>Leukemic T-cell</tissue>
    </source>
</reference>
<reference key="15">
    <citation type="journal article" date="2009" name="Science">
        <title>Lysine acetylation targets protein complexes and co-regulates major cellular functions.</title>
        <authorList>
            <person name="Choudhary C."/>
            <person name="Kumar C."/>
            <person name="Gnad F."/>
            <person name="Nielsen M.L."/>
            <person name="Rehman M."/>
            <person name="Walther T.C."/>
            <person name="Olsen J.V."/>
            <person name="Mann M."/>
        </authorList>
    </citation>
    <scope>ACETYLATION [LARGE SCALE ANALYSIS] AT LYS-41; LYS-123; LYS-192 AND LYS-241</scope>
    <scope>IDENTIFICATION BY MASS SPECTROMETRY [LARGE SCALE ANALYSIS]</scope>
</reference>
<reference key="16">
    <citation type="journal article" date="2011" name="BMC Syst. Biol.">
        <title>Initial characterization of the human central proteome.</title>
        <authorList>
            <person name="Burkard T.R."/>
            <person name="Planyavsky M."/>
            <person name="Kaupe I."/>
            <person name="Breitwieser F.P."/>
            <person name="Buerckstuemmer T."/>
            <person name="Bennett K.L."/>
            <person name="Superti-Furga G."/>
            <person name="Colinge J."/>
        </authorList>
    </citation>
    <scope>IDENTIFICATION BY MASS SPECTROMETRY [LARGE SCALE ANALYSIS]</scope>
</reference>
<reference key="17">
    <citation type="journal article" date="2013" name="J. Proteome Res.">
        <title>Toward a comprehensive characterization of a human cancer cell phosphoproteome.</title>
        <authorList>
            <person name="Zhou H."/>
            <person name="Di Palma S."/>
            <person name="Preisinger C."/>
            <person name="Peng M."/>
            <person name="Polat A.N."/>
            <person name="Heck A.J."/>
            <person name="Mohammed S."/>
        </authorList>
    </citation>
    <scope>PHOSPHORYLATION [LARGE SCALE ANALYSIS] AT SER-275 AND THR-308</scope>
    <scope>IDENTIFICATION BY MASS SPECTROMETRY [LARGE SCALE ANALYSIS]</scope>
    <source>
        <tissue>Erythroleukemia</tissue>
    </source>
</reference>
<reference key="18">
    <citation type="journal article" date="2014" name="J. Proteomics">
        <title>An enzyme assisted RP-RPLC approach for in-depth analysis of human liver phosphoproteome.</title>
        <authorList>
            <person name="Bian Y."/>
            <person name="Song C."/>
            <person name="Cheng K."/>
            <person name="Dong M."/>
            <person name="Wang F."/>
            <person name="Huang J."/>
            <person name="Sun D."/>
            <person name="Wang L."/>
            <person name="Ye M."/>
            <person name="Zou H."/>
        </authorList>
    </citation>
    <scope>PHOSPHORYLATION [LARGE SCALE ANALYSIS] AT SER-275</scope>
    <scope>IDENTIFICATION BY MASS SPECTROMETRY [LARGE SCALE ANALYSIS]</scope>
    <source>
        <tissue>Liver</tissue>
    </source>
</reference>
<sequence length="486" mass="54014">MWKSVVGHDVSVSVETQGDDWDTDPDFVNDISEKEQRWGAKTIEGSGRTEHINIHQLRNKVSEEHDVLRKKEMESGPKASHGYGGRFGVERDRMDKSAVGHEYVAEVEKHSSQTDAAKGFGGKYGVERDRADKSAVGFDYKGEVEKHTSQKDYSRGFGGRYGVEKDKWDKAALGYDYKGETEKHESQRDYAKGFGGQYGIQKDRVDKSAVGFNEMEAPTTAYKKTTPIEAASSGTRGLKAKFESMAEEKRKREEEEKAQQVARRQQERKAVTKRSPEAPQPVIAMEEPAVPAPLPKKISSEAWPPVGTPPSSESEPVRTSREHPVPLLPIRQTLPEDNEEPPALPPRTLEGLQVEEEPVYEAEPEPEPEPEPEPENDYEDVEEMDRHEQEDEPEGDYEEVLEPEDSSFSSALAGSSGCPAGAGAGAVALGISAVAVYDYQGEGSDELSFDPDDVITDIEMVDEGWWRGRCHGHFGLFPANYVKLLE</sequence>
<protein>
    <recommendedName>
        <fullName>Hematopoietic lineage cell-specific protein</fullName>
    </recommendedName>
    <alternativeName>
        <fullName>Hematopoietic cell-specific LYN substrate 1</fullName>
    </alternativeName>
    <alternativeName>
        <fullName>LckBP1</fullName>
    </alternativeName>
    <alternativeName>
        <fullName>p75</fullName>
    </alternativeName>
</protein>
<evidence type="ECO:0000250" key="1"/>
<evidence type="ECO:0000250" key="2">
    <source>
        <dbReference type="UniProtKB" id="P49710"/>
    </source>
</evidence>
<evidence type="ECO:0000255" key="3">
    <source>
        <dbReference type="PROSITE-ProRule" id="PRU00192"/>
    </source>
</evidence>
<evidence type="ECO:0000256" key="4">
    <source>
        <dbReference type="SAM" id="MobiDB-lite"/>
    </source>
</evidence>
<evidence type="ECO:0000269" key="5">
    <source>
    </source>
</evidence>
<evidence type="ECO:0000269" key="6">
    <source>
    </source>
</evidence>
<evidence type="ECO:0000269" key="7">
    <source>
    </source>
</evidence>
<evidence type="ECO:0000269" key="8">
    <source>
    </source>
</evidence>
<evidence type="ECO:0000269" key="9">
    <source>
    </source>
</evidence>
<evidence type="ECO:0000269" key="10">
    <source>
    </source>
</evidence>
<evidence type="ECO:0000269" key="11">
    <source ref="2"/>
</evidence>
<evidence type="ECO:0000269" key="12">
    <source ref="4"/>
</evidence>
<evidence type="ECO:0000303" key="13">
    <source>
    </source>
</evidence>
<evidence type="ECO:0000305" key="14"/>
<evidence type="ECO:0000305" key="15">
    <source>
    </source>
</evidence>
<evidence type="ECO:0007744" key="16">
    <source>
    </source>
</evidence>
<evidence type="ECO:0007744" key="17">
    <source>
    </source>
</evidence>
<evidence type="ECO:0007744" key="18">
    <source>
    </source>
</evidence>
<evidence type="ECO:0007744" key="19">
    <source>
    </source>
</evidence>
<evidence type="ECO:0007744" key="20">
    <source>
    </source>
</evidence>
<evidence type="ECO:0007744" key="21">
    <source>
    </source>
</evidence>
<name>HCLS1_HUMAN</name>
<organism>
    <name type="scientific">Homo sapiens</name>
    <name type="common">Human</name>
    <dbReference type="NCBI Taxonomy" id="9606"/>
    <lineage>
        <taxon>Eukaryota</taxon>
        <taxon>Metazoa</taxon>
        <taxon>Chordata</taxon>
        <taxon>Craniata</taxon>
        <taxon>Vertebrata</taxon>
        <taxon>Euteleostomi</taxon>
        <taxon>Mammalia</taxon>
        <taxon>Eutheria</taxon>
        <taxon>Euarchontoglires</taxon>
        <taxon>Primates</taxon>
        <taxon>Haplorrhini</taxon>
        <taxon>Catarrhini</taxon>
        <taxon>Hominidae</taxon>
        <taxon>Homo</taxon>
    </lineage>
</organism>
<accession>P14317</accession>
<accession>B4DQ69</accession>
<accession>Q53Y93</accession>
<accession>Q6IBK9</accession>
<accession>Q9UDK0</accession>
<gene>
    <name type="primary">HCLS1</name>
    <name type="synonym">HS1</name>
</gene>
<proteinExistence type="evidence at protein level"/>
<comment type="function">
    <text>Substrate of the antigen receptor-coupled tyrosine kinase. Plays a role in antigen receptor signaling for both clonal expansion and deletion in lymphoid cells. May also be involved in the regulation of gene expression.</text>
</comment>
<comment type="subunit">
    <text evidence="1">Associates with the SH2 and SH3 domains of LCK. Binding to he LCK SH3 domain occurs constitutively, while binding to the LCK SH2 domain occurs only upon TCR stimulation. A similar binding pattern was observed with LYN, but not with FYN in which the FYN SH2 region associates upon TCR stimulation but the FYN SH3 region does not associate regardless of TCR stimulation. Directly associates with HAX1, through binding to its C-terminal region. Interacts with HS1BP3. Interacts with FES/FPS (By similarity). Interacts (via SH2 domain) with FGR. Forms a multiprotein complex with LYN and ANKRD54 (By similarity).</text>
</comment>
<comment type="interaction">
    <interactant intactId="EBI-750369">
        <id>P14317</id>
    </interactant>
    <interactant intactId="EBI-747035">
        <id>Q9H788</id>
        <label>SH2D4A</label>
    </interactant>
    <organismsDiffer>false</organismsDiffer>
    <experiments>8</experiments>
</comment>
<comment type="interaction">
    <interactant intactId="EBI-750369">
        <id>P14317</id>
    </interactant>
    <interactant intactId="EBI-12304031">
        <id>P78314-3</id>
        <label>SH3BP2</label>
    </interactant>
    <organismsDiffer>false</organismsDiffer>
    <experiments>3</experiments>
</comment>
<comment type="interaction">
    <interactant intactId="EBI-750369">
        <id>P14317</id>
    </interactant>
    <interactant intactId="EBI-710997">
        <id>P54274</id>
        <label>TERF1</label>
    </interactant>
    <organismsDiffer>false</organismsDiffer>
    <experiments>2</experiments>
</comment>
<comment type="interaction">
    <interactant intactId="EBI-750369">
        <id>P14317</id>
    </interactant>
    <interactant intactId="EBI-346356">
        <id>O43516</id>
        <label>WIPF1</label>
    </interactant>
    <organismsDiffer>false</organismsDiffer>
    <experiments>2</experiments>
</comment>
<comment type="subcellular location">
    <subcellularLocation>
        <location evidence="9">Membrane</location>
        <topology evidence="9">Peripheral membrane protein</topology>
    </subcellularLocation>
    <subcellularLocation>
        <location evidence="9">Cytoplasm</location>
    </subcellularLocation>
    <subcellularLocation>
        <location evidence="15">Mitochondrion</location>
    </subcellularLocation>
</comment>
<comment type="alternative products">
    <event type="alternative splicing"/>
    <isoform>
        <id>P14317-1</id>
        <name>1</name>
        <sequence type="displayed"/>
    </isoform>
    <isoform>
        <id>P14317-2</id>
        <name>2</name>
        <sequence type="described" ref="VSP_056429 VSP_056430"/>
    </isoform>
</comment>
<comment type="tissue specificity">
    <text>Expressed only in tissues and cells of hematopoietic origin.</text>
</comment>
<comment type="developmental stage">
    <text>Expressed in early stage of myeloid and erythroid differentiation.</text>
</comment>
<comment type="PTM">
    <text evidence="1 5 9 10">Phosphorylated by FES (By similarity). Phosphorylated by LYN, FYN and FGR after cross-linking of surface IgM on B-cells. Phosphorylation by LYN, FYN and FGR requires prior phosphorylation by SYK or FES.</text>
</comment>
<feature type="chain" id="PRO_0000083921" description="Hematopoietic lineage cell-specific protein">
    <location>
        <begin position="1"/>
        <end position="486"/>
    </location>
</feature>
<feature type="repeat" description="Cortactin 1">
    <location>
        <begin position="79"/>
        <end position="115"/>
    </location>
</feature>
<feature type="repeat" description="Cortactin 2">
    <location>
        <begin position="116"/>
        <end position="152"/>
    </location>
</feature>
<feature type="repeat" description="Cortactin 3">
    <location>
        <begin position="153"/>
        <end position="189"/>
    </location>
</feature>
<feature type="repeat" description="Cortactin 4; truncated">
    <location>
        <begin position="190"/>
        <end position="212"/>
    </location>
</feature>
<feature type="domain" description="SH3" evidence="3">
    <location>
        <begin position="428"/>
        <end position="486"/>
    </location>
</feature>
<feature type="region of interest" description="Involved in HAX-1 binding">
    <location>
        <begin position="27"/>
        <end position="66"/>
    </location>
</feature>
<feature type="region of interest" description="Disordered" evidence="4">
    <location>
        <begin position="243"/>
        <end position="419"/>
    </location>
</feature>
<feature type="compositionally biased region" description="Basic and acidic residues" evidence="4">
    <location>
        <begin position="243"/>
        <end position="276"/>
    </location>
</feature>
<feature type="compositionally biased region" description="Basic and acidic residues" evidence="4">
    <location>
        <begin position="315"/>
        <end position="324"/>
    </location>
</feature>
<feature type="compositionally biased region" description="Acidic residues" evidence="4">
    <location>
        <begin position="353"/>
        <end position="383"/>
    </location>
</feature>
<feature type="compositionally biased region" description="Acidic residues" evidence="4">
    <location>
        <begin position="390"/>
        <end position="405"/>
    </location>
</feature>
<feature type="compositionally biased region" description="Low complexity" evidence="4">
    <location>
        <begin position="406"/>
        <end position="419"/>
    </location>
</feature>
<feature type="modified residue" description="N6-acetyllysine" evidence="18">
    <location>
        <position position="41"/>
    </location>
</feature>
<feature type="modified residue" description="N6-acetyllysine" evidence="18">
    <location>
        <position position="123"/>
    </location>
</feature>
<feature type="modified residue" description="Phosphotyrosine" evidence="2">
    <location>
        <position position="140"/>
    </location>
</feature>
<feature type="modified residue" description="N6-acetyllysine" evidence="18">
    <location>
        <position position="192"/>
    </location>
</feature>
<feature type="modified residue" description="Phosphotyrosine" evidence="16 17">
    <location>
        <position position="198"/>
    </location>
</feature>
<feature type="modified residue" description="Phosphotyrosine; by FGR" evidence="5 10">
    <location>
        <position position="222"/>
    </location>
</feature>
<feature type="modified residue" description="N6-acetyllysine" evidence="18">
    <location>
        <position position="241"/>
    </location>
</feature>
<feature type="modified residue" description="Phosphoserine" evidence="19 20 21">
    <location>
        <position position="275"/>
    </location>
</feature>
<feature type="modified residue" description="Phosphothreonine" evidence="19 20">
    <location>
        <position position="308"/>
    </location>
</feature>
<feature type="modified residue" description="Phosphotyrosine; by SYK and FES" evidence="2">
    <location>
        <position position="378"/>
    </location>
</feature>
<feature type="modified residue" description="Phosphotyrosine; by SYK and FES" evidence="2">
    <location>
        <position position="397"/>
    </location>
</feature>
<feature type="splice variant" id="VSP_056429" description="In isoform 2." evidence="13">
    <original>SAVGFDYKGEVEKHTSQKDYSRGFGGRYGVEKDKWDKAALGYDYKGETEKHESQRDYAKGFGGQYGIQKDRVDKSA</original>
    <variation>ITLVALVAGTGWRRINGTKQLWDMTTRERRRNTSPREIMPRALVASMESRRTEWIRALSASMKWRPRPQLIRRRRP</variation>
    <location>
        <begin position="134"/>
        <end position="209"/>
    </location>
</feature>
<feature type="splice variant" id="VSP_056430" description="In isoform 2." evidence="13">
    <location>
        <begin position="210"/>
        <end position="486"/>
    </location>
</feature>
<feature type="sequence variant" id="VAR_055006" description="In dbSNP:rs2070179." evidence="6 7 8 11 12">
    <original>T</original>
    <variation>A</variation>
    <location>
        <position position="235"/>
    </location>
</feature>
<feature type="sequence variant" id="VAR_055007" description="In dbSNP:rs2070180.">
    <original>E</original>
    <variation>K</variation>
    <location>
        <position position="361"/>
    </location>
</feature>
<feature type="sequence variant" id="VAR_056910" description="In dbSNP:rs9869984." evidence="6 7 8 11 12">
    <original>V</original>
    <variation>L</variation>
    <location>
        <position position="436"/>
    </location>
</feature>
<feature type="sequence conflict" description="In Ref. 8; AA sequence." evidence="14" ref="8">
    <original>KF</original>
    <variation>FK</variation>
    <location>
        <begin position="241"/>
        <end position="242"/>
    </location>
</feature>
<feature type="sequence conflict" description="In Ref. 4; CAG33075." evidence="14" ref="4">
    <original>E</original>
    <variation>D</variation>
    <location>
        <position position="486"/>
    </location>
</feature>
<keyword id="KW-0007">Acetylation</keyword>
<keyword id="KW-0025">Alternative splicing</keyword>
<keyword id="KW-0963">Cytoplasm</keyword>
<keyword id="KW-0903">Direct protein sequencing</keyword>
<keyword id="KW-0472">Membrane</keyword>
<keyword id="KW-0496">Mitochondrion</keyword>
<keyword id="KW-0597">Phosphoprotein</keyword>
<keyword id="KW-1267">Proteomics identification</keyword>
<keyword id="KW-1185">Reference proteome</keyword>
<keyword id="KW-0677">Repeat</keyword>
<keyword id="KW-0728">SH3 domain</keyword>